<organism>
    <name type="scientific">Bradyrhizobium diazoefficiens (strain JCM 10833 / BCRC 13528 / IAM 13628 / NBRC 14792 / USDA 110)</name>
    <dbReference type="NCBI Taxonomy" id="224911"/>
    <lineage>
        <taxon>Bacteria</taxon>
        <taxon>Pseudomonadati</taxon>
        <taxon>Pseudomonadota</taxon>
        <taxon>Alphaproteobacteria</taxon>
        <taxon>Hyphomicrobiales</taxon>
        <taxon>Nitrobacteraceae</taxon>
        <taxon>Bradyrhizobium</taxon>
    </lineage>
</organism>
<gene>
    <name evidence="1" type="primary">gcvP</name>
    <name type="ordered locus">blr5753</name>
</gene>
<evidence type="ECO:0000255" key="1">
    <source>
        <dbReference type="HAMAP-Rule" id="MF_00711"/>
    </source>
</evidence>
<feature type="chain" id="PRO_0000166907" description="Glycine dehydrogenase (decarboxylating)">
    <location>
        <begin position="1"/>
        <end position="955"/>
    </location>
</feature>
<feature type="modified residue" description="N6-(pyridoxal phosphate)lysine" evidence="1">
    <location>
        <position position="702"/>
    </location>
</feature>
<keyword id="KW-0560">Oxidoreductase</keyword>
<keyword id="KW-0663">Pyridoxal phosphate</keyword>
<keyword id="KW-1185">Reference proteome</keyword>
<comment type="function">
    <text evidence="1">The glycine cleavage system catalyzes the degradation of glycine. The P protein binds the alpha-amino group of glycine through its pyridoxal phosphate cofactor; CO(2) is released and the remaining methylamine moiety is then transferred to the lipoamide cofactor of the H protein.</text>
</comment>
<comment type="catalytic activity">
    <reaction evidence="1">
        <text>N(6)-[(R)-lipoyl]-L-lysyl-[glycine-cleavage complex H protein] + glycine + H(+) = N(6)-[(R)-S(8)-aminomethyldihydrolipoyl]-L-lysyl-[glycine-cleavage complex H protein] + CO2</text>
        <dbReference type="Rhea" id="RHEA:24304"/>
        <dbReference type="Rhea" id="RHEA-COMP:10494"/>
        <dbReference type="Rhea" id="RHEA-COMP:10495"/>
        <dbReference type="ChEBI" id="CHEBI:15378"/>
        <dbReference type="ChEBI" id="CHEBI:16526"/>
        <dbReference type="ChEBI" id="CHEBI:57305"/>
        <dbReference type="ChEBI" id="CHEBI:83099"/>
        <dbReference type="ChEBI" id="CHEBI:83143"/>
        <dbReference type="EC" id="1.4.4.2"/>
    </reaction>
</comment>
<comment type="cofactor">
    <cofactor evidence="1">
        <name>pyridoxal 5'-phosphate</name>
        <dbReference type="ChEBI" id="CHEBI:597326"/>
    </cofactor>
</comment>
<comment type="subunit">
    <text evidence="1">The glycine cleavage system is composed of four proteins: P, T, L and H.</text>
</comment>
<comment type="similarity">
    <text evidence="1">Belongs to the GcvP family.</text>
</comment>
<protein>
    <recommendedName>
        <fullName evidence="1">Glycine dehydrogenase (decarboxylating)</fullName>
        <ecNumber evidence="1">1.4.4.2</ecNumber>
    </recommendedName>
    <alternativeName>
        <fullName evidence="1">Glycine cleavage system P-protein</fullName>
    </alternativeName>
    <alternativeName>
        <fullName evidence="1">Glycine decarboxylase</fullName>
    </alternativeName>
    <alternativeName>
        <fullName evidence="1">Glycine dehydrogenase (aminomethyl-transferring)</fullName>
    </alternativeName>
</protein>
<reference key="1">
    <citation type="journal article" date="2002" name="DNA Res.">
        <title>Complete genomic sequence of nitrogen-fixing symbiotic bacterium Bradyrhizobium japonicum USDA110.</title>
        <authorList>
            <person name="Kaneko T."/>
            <person name="Nakamura Y."/>
            <person name="Sato S."/>
            <person name="Minamisawa K."/>
            <person name="Uchiumi T."/>
            <person name="Sasamoto S."/>
            <person name="Watanabe A."/>
            <person name="Idesawa K."/>
            <person name="Iriguchi M."/>
            <person name="Kawashima K."/>
            <person name="Kohara M."/>
            <person name="Matsumoto M."/>
            <person name="Shimpo S."/>
            <person name="Tsuruoka H."/>
            <person name="Wada T."/>
            <person name="Yamada M."/>
            <person name="Tabata S."/>
        </authorList>
    </citation>
    <scope>NUCLEOTIDE SEQUENCE [LARGE SCALE GENOMIC DNA]</scope>
    <source>
        <strain>JCM 10833 / BCRC 13528 / IAM 13628 / NBRC 14792 / USDA 110</strain>
    </source>
</reference>
<name>GCSP_BRADU</name>
<sequence length="955" mass="102392">MMTAHRKSNGDTTNFARRHIGPSARDVAAMLETVGAKSVDALMAETLPASIRQAAPLDLGKPLSETEAIAHMGELAAQNQVFTSLIGQGYSGTILPAVIQRNILENPAWYTAYTPYQPEISQGRLEALFNFQTMICDLTGLDVANASLLDEATAAAEAMALAERHSRVEAKAFFVDKDVHPQTLAVMRTRAEPLGWNLIVGDPLTDLDKADVLGALLQYPGSSGALRDLRPAIAALKAKGALAIVAADLLALTLLASPGELGADIAIGSAQRFGVPMGYGGPHAAYMAVRDALKRSLPGRIVGLSVDSRGMPAYRLALQTREQHIRREKATSNICTAQVLLAVIAAMYAVYHGPEGLSQIARQVHRRAAVLAAGLRKLGFAPHSDSFFDTLSVDAGAKRAEIVARAAAEKINLGVGETALRIALDETTTPATVEAVWRAFGGQLAYAELDATTREALPEALKRTTAFLTHPVFHAHRSETEMLRYMRKLSDRDLALDRAMIPLGSCTMKLNATTEMMPLTWPEFGSLHPFAPREQAKGYHALFARLEKWLCDITGYDAISLQPNSGAQGEYAGLLAIRGYHAARGEAHRKICLIPSSAHGTNPASAAMVGMDVVVVACEKNGDVDVNDLRAKADKHANDLAAIMITYPSTHGVFEEHIREICDIVHGHGGQVYLDGANLNAQVGLSRPGDYGADVSHLNLHKTFCIPHGGGGPGMGPIGVKAHLAPFLPGHPATRGDAPVGPVSAAPFGSASILTISYIYILMMGGEGLKRATEIAILNANYIAARLDAHFPVLYKNARGRVAHECIVDPRALKTTSGVTVDDIAKRLIDYGFHAPTMSFPVPGTLMIEPTESESKAELDRFCDAMIAIRKEIGEVEAGRFKIEASPLRHAPHTVHDIADDAWARAYSRAEGCFPDGVSRTDKYWSPVGRVDNVYGDRNLVCSCPPVSDYAEAAE</sequence>
<accession>Q89I86</accession>
<dbReference type="EC" id="1.4.4.2" evidence="1"/>
<dbReference type="EMBL" id="BA000040">
    <property type="protein sequence ID" value="BAC51018.1"/>
    <property type="molecule type" value="Genomic_DNA"/>
</dbReference>
<dbReference type="RefSeq" id="NP_772393.1">
    <property type="nucleotide sequence ID" value="NC_004463.1"/>
</dbReference>
<dbReference type="SMR" id="Q89I86"/>
<dbReference type="FunCoup" id="Q89I86">
    <property type="interactions" value="603"/>
</dbReference>
<dbReference type="STRING" id="224911.AAV28_26275"/>
<dbReference type="EnsemblBacteria" id="BAC51018">
    <property type="protein sequence ID" value="BAC51018"/>
    <property type="gene ID" value="BAC51018"/>
</dbReference>
<dbReference type="KEGG" id="bja:blr5753"/>
<dbReference type="PATRIC" id="fig|224911.5.peg.5868"/>
<dbReference type="eggNOG" id="COG0403">
    <property type="taxonomic scope" value="Bacteria"/>
</dbReference>
<dbReference type="eggNOG" id="COG1003">
    <property type="taxonomic scope" value="Bacteria"/>
</dbReference>
<dbReference type="HOGENOM" id="CLU_004620_3_2_5"/>
<dbReference type="InParanoid" id="Q89I86"/>
<dbReference type="OrthoDB" id="9801272at2"/>
<dbReference type="PhylomeDB" id="Q89I86"/>
<dbReference type="Proteomes" id="UP000002526">
    <property type="component" value="Chromosome"/>
</dbReference>
<dbReference type="GO" id="GO:0005829">
    <property type="term" value="C:cytosol"/>
    <property type="evidence" value="ECO:0000318"/>
    <property type="project" value="GO_Central"/>
</dbReference>
<dbReference type="GO" id="GO:0005960">
    <property type="term" value="C:glycine cleavage complex"/>
    <property type="evidence" value="ECO:0000318"/>
    <property type="project" value="GO_Central"/>
</dbReference>
<dbReference type="GO" id="GO:0016594">
    <property type="term" value="F:glycine binding"/>
    <property type="evidence" value="ECO:0000318"/>
    <property type="project" value="GO_Central"/>
</dbReference>
<dbReference type="GO" id="GO:0004375">
    <property type="term" value="F:glycine dehydrogenase (decarboxylating) activity"/>
    <property type="evidence" value="ECO:0000318"/>
    <property type="project" value="GO_Central"/>
</dbReference>
<dbReference type="GO" id="GO:0030170">
    <property type="term" value="F:pyridoxal phosphate binding"/>
    <property type="evidence" value="ECO:0000318"/>
    <property type="project" value="GO_Central"/>
</dbReference>
<dbReference type="GO" id="GO:0019464">
    <property type="term" value="P:glycine decarboxylation via glycine cleavage system"/>
    <property type="evidence" value="ECO:0000318"/>
    <property type="project" value="GO_Central"/>
</dbReference>
<dbReference type="CDD" id="cd00613">
    <property type="entry name" value="GDC-P"/>
    <property type="match status" value="2"/>
</dbReference>
<dbReference type="FunFam" id="3.40.640.10:FF:000005">
    <property type="entry name" value="Glycine dehydrogenase (decarboxylating), mitochondrial"/>
    <property type="match status" value="1"/>
</dbReference>
<dbReference type="FunFam" id="3.90.1150.10:FF:000007">
    <property type="entry name" value="Glycine dehydrogenase (decarboxylating), mitochondrial"/>
    <property type="match status" value="1"/>
</dbReference>
<dbReference type="FunFam" id="3.40.640.10:FF:000007">
    <property type="entry name" value="glycine dehydrogenase (Decarboxylating), mitochondrial"/>
    <property type="match status" value="1"/>
</dbReference>
<dbReference type="Gene3D" id="3.90.1150.10">
    <property type="entry name" value="Aspartate Aminotransferase, domain 1"/>
    <property type="match status" value="2"/>
</dbReference>
<dbReference type="Gene3D" id="3.40.640.10">
    <property type="entry name" value="Type I PLP-dependent aspartate aminotransferase-like (Major domain)"/>
    <property type="match status" value="2"/>
</dbReference>
<dbReference type="HAMAP" id="MF_00711">
    <property type="entry name" value="GcvP"/>
    <property type="match status" value="1"/>
</dbReference>
<dbReference type="InterPro" id="IPR003437">
    <property type="entry name" value="GcvP"/>
</dbReference>
<dbReference type="InterPro" id="IPR049316">
    <property type="entry name" value="GDC-P_C"/>
</dbReference>
<dbReference type="InterPro" id="IPR049315">
    <property type="entry name" value="GDC-P_N"/>
</dbReference>
<dbReference type="InterPro" id="IPR020581">
    <property type="entry name" value="GDC_P"/>
</dbReference>
<dbReference type="InterPro" id="IPR015424">
    <property type="entry name" value="PyrdxlP-dep_Trfase"/>
</dbReference>
<dbReference type="InterPro" id="IPR015421">
    <property type="entry name" value="PyrdxlP-dep_Trfase_major"/>
</dbReference>
<dbReference type="InterPro" id="IPR015422">
    <property type="entry name" value="PyrdxlP-dep_Trfase_small"/>
</dbReference>
<dbReference type="NCBIfam" id="TIGR00461">
    <property type="entry name" value="gcvP"/>
    <property type="match status" value="1"/>
</dbReference>
<dbReference type="NCBIfam" id="NF001696">
    <property type="entry name" value="PRK00451.1"/>
    <property type="match status" value="1"/>
</dbReference>
<dbReference type="NCBIfam" id="NF003346">
    <property type="entry name" value="PRK04366.1"/>
    <property type="match status" value="1"/>
</dbReference>
<dbReference type="PANTHER" id="PTHR11773:SF1">
    <property type="entry name" value="GLYCINE DEHYDROGENASE (DECARBOXYLATING), MITOCHONDRIAL"/>
    <property type="match status" value="1"/>
</dbReference>
<dbReference type="PANTHER" id="PTHR11773">
    <property type="entry name" value="GLYCINE DEHYDROGENASE, DECARBOXYLATING"/>
    <property type="match status" value="1"/>
</dbReference>
<dbReference type="Pfam" id="PF21478">
    <property type="entry name" value="GcvP2_C"/>
    <property type="match status" value="1"/>
</dbReference>
<dbReference type="Pfam" id="PF02347">
    <property type="entry name" value="GDC-P"/>
    <property type="match status" value="2"/>
</dbReference>
<dbReference type="SUPFAM" id="SSF53383">
    <property type="entry name" value="PLP-dependent transferases"/>
    <property type="match status" value="2"/>
</dbReference>
<proteinExistence type="inferred from homology"/>